<reference key="1">
    <citation type="journal article" date="2005" name="Proc. Natl. Acad. Sci. U.S.A.">
        <title>Complete genome sequence of Vibrio fischeri: a symbiotic bacterium with pathogenic congeners.</title>
        <authorList>
            <person name="Ruby E.G."/>
            <person name="Urbanowski M."/>
            <person name="Campbell J."/>
            <person name="Dunn A."/>
            <person name="Faini M."/>
            <person name="Gunsalus R."/>
            <person name="Lostroh P."/>
            <person name="Lupp C."/>
            <person name="McCann J."/>
            <person name="Millikan D."/>
            <person name="Schaefer A."/>
            <person name="Stabb E."/>
            <person name="Stevens A."/>
            <person name="Visick K."/>
            <person name="Whistler C."/>
            <person name="Greenberg E.P."/>
        </authorList>
    </citation>
    <scope>NUCLEOTIDE SEQUENCE [LARGE SCALE GENOMIC DNA]</scope>
    <source>
        <strain>ATCC 700601 / ES114</strain>
    </source>
</reference>
<name>RL21_ALIF1</name>
<feature type="chain" id="PRO_0000269421" description="Large ribosomal subunit protein bL21">
    <location>
        <begin position="1"/>
        <end position="103"/>
    </location>
</feature>
<accession>Q5E873</accession>
<comment type="function">
    <text evidence="1">This protein binds to 23S rRNA in the presence of protein L20.</text>
</comment>
<comment type="subunit">
    <text evidence="1">Part of the 50S ribosomal subunit. Contacts protein L20.</text>
</comment>
<comment type="similarity">
    <text evidence="1">Belongs to the bacterial ribosomal protein bL21 family.</text>
</comment>
<evidence type="ECO:0000255" key="1">
    <source>
        <dbReference type="HAMAP-Rule" id="MF_01363"/>
    </source>
</evidence>
<evidence type="ECO:0000305" key="2"/>
<organism>
    <name type="scientific">Aliivibrio fischeri (strain ATCC 700601 / ES114)</name>
    <name type="common">Vibrio fischeri</name>
    <dbReference type="NCBI Taxonomy" id="312309"/>
    <lineage>
        <taxon>Bacteria</taxon>
        <taxon>Pseudomonadati</taxon>
        <taxon>Pseudomonadota</taxon>
        <taxon>Gammaproteobacteria</taxon>
        <taxon>Vibrionales</taxon>
        <taxon>Vibrionaceae</taxon>
        <taxon>Aliivibrio</taxon>
    </lineage>
</organism>
<gene>
    <name evidence="1" type="primary">rplU</name>
    <name type="ordered locus">VF_0278</name>
</gene>
<keyword id="KW-1185">Reference proteome</keyword>
<keyword id="KW-0687">Ribonucleoprotein</keyword>
<keyword id="KW-0689">Ribosomal protein</keyword>
<keyword id="KW-0694">RNA-binding</keyword>
<keyword id="KW-0699">rRNA-binding</keyword>
<dbReference type="EMBL" id="CP000020">
    <property type="protein sequence ID" value="AAW84773.1"/>
    <property type="molecule type" value="Genomic_DNA"/>
</dbReference>
<dbReference type="RefSeq" id="WP_005417305.1">
    <property type="nucleotide sequence ID" value="NZ_CAWLES010000001.1"/>
</dbReference>
<dbReference type="RefSeq" id="YP_203661.1">
    <property type="nucleotide sequence ID" value="NC_006840.2"/>
</dbReference>
<dbReference type="SMR" id="Q5E873"/>
<dbReference type="STRING" id="312309.VF_0278"/>
<dbReference type="EnsemblBacteria" id="AAW84773">
    <property type="protein sequence ID" value="AAW84773"/>
    <property type="gene ID" value="VF_0278"/>
</dbReference>
<dbReference type="GeneID" id="54162899"/>
<dbReference type="KEGG" id="vfi:VF_0278"/>
<dbReference type="PATRIC" id="fig|312309.11.peg.273"/>
<dbReference type="eggNOG" id="COG0261">
    <property type="taxonomic scope" value="Bacteria"/>
</dbReference>
<dbReference type="HOGENOM" id="CLU_061463_3_3_6"/>
<dbReference type="OrthoDB" id="9813334at2"/>
<dbReference type="Proteomes" id="UP000000537">
    <property type="component" value="Chromosome I"/>
</dbReference>
<dbReference type="GO" id="GO:0005737">
    <property type="term" value="C:cytoplasm"/>
    <property type="evidence" value="ECO:0007669"/>
    <property type="project" value="UniProtKB-ARBA"/>
</dbReference>
<dbReference type="GO" id="GO:1990904">
    <property type="term" value="C:ribonucleoprotein complex"/>
    <property type="evidence" value="ECO:0007669"/>
    <property type="project" value="UniProtKB-KW"/>
</dbReference>
<dbReference type="GO" id="GO:0005840">
    <property type="term" value="C:ribosome"/>
    <property type="evidence" value="ECO:0007669"/>
    <property type="project" value="UniProtKB-KW"/>
</dbReference>
<dbReference type="GO" id="GO:0019843">
    <property type="term" value="F:rRNA binding"/>
    <property type="evidence" value="ECO:0007669"/>
    <property type="project" value="UniProtKB-UniRule"/>
</dbReference>
<dbReference type="GO" id="GO:0003735">
    <property type="term" value="F:structural constituent of ribosome"/>
    <property type="evidence" value="ECO:0007669"/>
    <property type="project" value="InterPro"/>
</dbReference>
<dbReference type="GO" id="GO:0006412">
    <property type="term" value="P:translation"/>
    <property type="evidence" value="ECO:0007669"/>
    <property type="project" value="UniProtKB-UniRule"/>
</dbReference>
<dbReference type="HAMAP" id="MF_01363">
    <property type="entry name" value="Ribosomal_bL21"/>
    <property type="match status" value="1"/>
</dbReference>
<dbReference type="InterPro" id="IPR028909">
    <property type="entry name" value="bL21-like"/>
</dbReference>
<dbReference type="InterPro" id="IPR036164">
    <property type="entry name" value="bL21-like_sf"/>
</dbReference>
<dbReference type="InterPro" id="IPR001787">
    <property type="entry name" value="Ribosomal_bL21"/>
</dbReference>
<dbReference type="InterPro" id="IPR018258">
    <property type="entry name" value="Ribosomal_bL21_CS"/>
</dbReference>
<dbReference type="NCBIfam" id="TIGR00061">
    <property type="entry name" value="L21"/>
    <property type="match status" value="1"/>
</dbReference>
<dbReference type="PANTHER" id="PTHR21349">
    <property type="entry name" value="50S RIBOSOMAL PROTEIN L21"/>
    <property type="match status" value="1"/>
</dbReference>
<dbReference type="PANTHER" id="PTHR21349:SF0">
    <property type="entry name" value="LARGE RIBOSOMAL SUBUNIT PROTEIN BL21M"/>
    <property type="match status" value="1"/>
</dbReference>
<dbReference type="Pfam" id="PF00829">
    <property type="entry name" value="Ribosomal_L21p"/>
    <property type="match status" value="1"/>
</dbReference>
<dbReference type="SUPFAM" id="SSF141091">
    <property type="entry name" value="L21p-like"/>
    <property type="match status" value="1"/>
</dbReference>
<dbReference type="PROSITE" id="PS01169">
    <property type="entry name" value="RIBOSOMAL_L21"/>
    <property type="match status" value="1"/>
</dbReference>
<protein>
    <recommendedName>
        <fullName evidence="1">Large ribosomal subunit protein bL21</fullName>
    </recommendedName>
    <alternativeName>
        <fullName evidence="2">50S ribosomal protein L21</fullName>
    </alternativeName>
</protein>
<sequence>MYAVFQSGGKQHRVSEGQTLRLEKLDVETGATVEFDNVLMIANGEEITVGAPLVAGGKVTAEVVQHGRGDKVKIVKFRRRKHSRKQQGHRQWFTEVKITGISA</sequence>
<proteinExistence type="inferred from homology"/>